<comment type="function">
    <text evidence="1 3">Key transcriptional regulator of type I interferon (IFN)-dependent immune responses which plays a critical role in the innate immune response against DNA and RNA viruses. Regulates the transcription of type I IFN genes (IFN-alpha and IFN-beta) and IFN-stimulated genes (ISG) by binding to an interferon-stimulated response element (ISRE) in their promoters. May activate transcription by complex formation with other transcriptional factors, possibly members of the STAT family. Binds specifically to the IFN-stimulated response element (ISRE) but not to the IRF-1 binding site PRD-I.</text>
</comment>
<comment type="subcellular location">
    <subcellularLocation>
        <location evidence="1">Cytoplasm</location>
    </subcellularLocation>
    <subcellularLocation>
        <location evidence="1">Nucleus</location>
    </subcellularLocation>
    <text evidence="1">Shuttles between cytoplasmic and nuclear compartments, with export being the prevailing effect. When activated, IRF3 interaction with CREBBP prevents its export to the cytoplasm.</text>
</comment>
<comment type="tissue specificity">
    <text evidence="3">Widely expressed with higher expression in lung, spleen and intestine.</text>
</comment>
<comment type="induction">
    <text evidence="3">Up-regulated by poly I:C.</text>
</comment>
<comment type="similarity">
    <text evidence="2">Belongs to the IRF family.</text>
</comment>
<keyword id="KW-0010">Activator</keyword>
<keyword id="KW-0051">Antiviral defense</keyword>
<keyword id="KW-0963">Cytoplasm</keyword>
<keyword id="KW-0238">DNA-binding</keyword>
<keyword id="KW-0539">Nucleus</keyword>
<keyword id="KW-1185">Reference proteome</keyword>
<keyword id="KW-0804">Transcription</keyword>
<keyword id="KW-0805">Transcription regulation</keyword>
<organism>
    <name type="scientific">Gallus gallus</name>
    <name type="common">Chicken</name>
    <dbReference type="NCBI Taxonomy" id="9031"/>
    <lineage>
        <taxon>Eukaryota</taxon>
        <taxon>Metazoa</taxon>
        <taxon>Chordata</taxon>
        <taxon>Craniata</taxon>
        <taxon>Vertebrata</taxon>
        <taxon>Euteleostomi</taxon>
        <taxon>Archelosauria</taxon>
        <taxon>Archosauria</taxon>
        <taxon>Dinosauria</taxon>
        <taxon>Saurischia</taxon>
        <taxon>Theropoda</taxon>
        <taxon>Coelurosauria</taxon>
        <taxon>Aves</taxon>
        <taxon>Neognathae</taxon>
        <taxon>Galloanserae</taxon>
        <taxon>Galliformes</taxon>
        <taxon>Phasianidae</taxon>
        <taxon>Phasianinae</taxon>
        <taxon>Gallus</taxon>
    </lineage>
</organism>
<dbReference type="EMBL" id="U20338">
    <property type="protein sequence ID" value="AAA86995.1"/>
    <property type="molecule type" value="mRNA"/>
</dbReference>
<dbReference type="PIR" id="S56753">
    <property type="entry name" value="S56753"/>
</dbReference>
<dbReference type="RefSeq" id="NP_990703.1">
    <property type="nucleotide sequence ID" value="NM_205372.1"/>
</dbReference>
<dbReference type="SMR" id="Q90643"/>
<dbReference type="FunCoup" id="Q90643">
    <property type="interactions" value="287"/>
</dbReference>
<dbReference type="STRING" id="9031.ENSGALP00000038233"/>
<dbReference type="PaxDb" id="9031-ENSGALP00000038233"/>
<dbReference type="GeneID" id="396330"/>
<dbReference type="KEGG" id="gga:396330"/>
<dbReference type="CTD" id="3665"/>
<dbReference type="VEuPathDB" id="HostDB:geneid_396330"/>
<dbReference type="eggNOG" id="ENOG502R2I9">
    <property type="taxonomic scope" value="Eukaryota"/>
</dbReference>
<dbReference type="InParanoid" id="Q90643"/>
<dbReference type="OrthoDB" id="8691508at2759"/>
<dbReference type="PhylomeDB" id="Q90643"/>
<dbReference type="Reactome" id="R-GGA-1227882">
    <property type="pathway name" value="TRAF mediated activation of IRF"/>
</dbReference>
<dbReference type="Reactome" id="R-GGA-433819">
    <property type="pathway name" value="Viral dsRNA:TLR3:TICAM1 Complex Activates IKBKE_CHICK"/>
</dbReference>
<dbReference type="Reactome" id="R-GGA-434136">
    <property type="pathway name" value="Viral dsRNA:TLR3:TICAM1 Complex Activates TBK1"/>
</dbReference>
<dbReference type="PRO" id="PR:Q90643"/>
<dbReference type="Proteomes" id="UP000000539">
    <property type="component" value="Unassembled WGS sequence"/>
</dbReference>
<dbReference type="GO" id="GO:0005737">
    <property type="term" value="C:cytoplasm"/>
    <property type="evidence" value="ECO:0007669"/>
    <property type="project" value="UniProtKB-SubCell"/>
</dbReference>
<dbReference type="GO" id="GO:0005634">
    <property type="term" value="C:nucleus"/>
    <property type="evidence" value="ECO:0000318"/>
    <property type="project" value="GO_Central"/>
</dbReference>
<dbReference type="GO" id="GO:0000981">
    <property type="term" value="F:DNA-binding transcription factor activity, RNA polymerase II-specific"/>
    <property type="evidence" value="ECO:0000318"/>
    <property type="project" value="GO_Central"/>
</dbReference>
<dbReference type="GO" id="GO:0000978">
    <property type="term" value="F:RNA polymerase II cis-regulatory region sequence-specific DNA binding"/>
    <property type="evidence" value="ECO:0000318"/>
    <property type="project" value="GO_Central"/>
</dbReference>
<dbReference type="GO" id="GO:0051607">
    <property type="term" value="P:defense response to virus"/>
    <property type="evidence" value="ECO:0007669"/>
    <property type="project" value="UniProtKB-KW"/>
</dbReference>
<dbReference type="GO" id="GO:0002376">
    <property type="term" value="P:immune system process"/>
    <property type="evidence" value="ECO:0000318"/>
    <property type="project" value="GO_Central"/>
</dbReference>
<dbReference type="GO" id="GO:0045893">
    <property type="term" value="P:positive regulation of DNA-templated transcription"/>
    <property type="evidence" value="ECO:0007669"/>
    <property type="project" value="UniProtKB-ARBA"/>
</dbReference>
<dbReference type="GO" id="GO:0032481">
    <property type="term" value="P:positive regulation of type I interferon production"/>
    <property type="evidence" value="ECO:0000250"/>
    <property type="project" value="UniProtKB"/>
</dbReference>
<dbReference type="GO" id="GO:0006357">
    <property type="term" value="P:regulation of transcription by RNA polymerase II"/>
    <property type="evidence" value="ECO:0000318"/>
    <property type="project" value="GO_Central"/>
</dbReference>
<dbReference type="GO" id="GO:0002224">
    <property type="term" value="P:toll-like receptor signaling pathway"/>
    <property type="evidence" value="ECO:0000303"/>
    <property type="project" value="AgBase"/>
</dbReference>
<dbReference type="GO" id="GO:0035666">
    <property type="term" value="P:TRIF-dependent toll-like receptor signaling pathway"/>
    <property type="evidence" value="ECO:0000250"/>
    <property type="project" value="UniProtKB"/>
</dbReference>
<dbReference type="CDD" id="cd00103">
    <property type="entry name" value="IRF"/>
    <property type="match status" value="1"/>
</dbReference>
<dbReference type="FunFam" id="1.10.10.10:FF:000631">
    <property type="entry name" value="Interferon regulatory factor 7"/>
    <property type="match status" value="1"/>
</dbReference>
<dbReference type="FunFam" id="2.60.200.10:FF:000007">
    <property type="entry name" value="Interferon regulatory factor 7"/>
    <property type="match status" value="1"/>
</dbReference>
<dbReference type="Gene3D" id="2.60.200.10">
    <property type="match status" value="1"/>
</dbReference>
<dbReference type="Gene3D" id="1.10.10.10">
    <property type="entry name" value="Winged helix-like DNA-binding domain superfamily/Winged helix DNA-binding domain"/>
    <property type="match status" value="1"/>
</dbReference>
<dbReference type="InterPro" id="IPR019817">
    <property type="entry name" value="Interferon_reg_fac_CS"/>
</dbReference>
<dbReference type="InterPro" id="IPR001346">
    <property type="entry name" value="Interferon_reg_fact_DNA-bd_dom"/>
</dbReference>
<dbReference type="InterPro" id="IPR019471">
    <property type="entry name" value="Interferon_reg_factor-3"/>
</dbReference>
<dbReference type="InterPro" id="IPR017855">
    <property type="entry name" value="SMAD-like_dom_sf"/>
</dbReference>
<dbReference type="InterPro" id="IPR008984">
    <property type="entry name" value="SMAD_FHA_dom_sf"/>
</dbReference>
<dbReference type="InterPro" id="IPR036388">
    <property type="entry name" value="WH-like_DNA-bd_sf"/>
</dbReference>
<dbReference type="InterPro" id="IPR036390">
    <property type="entry name" value="WH_DNA-bd_sf"/>
</dbReference>
<dbReference type="PANTHER" id="PTHR11949">
    <property type="entry name" value="INTERFERON REGULATORY FACTOR"/>
    <property type="match status" value="1"/>
</dbReference>
<dbReference type="PANTHER" id="PTHR11949:SF2">
    <property type="entry name" value="INTERFERON REGULATORY FACTOR 7"/>
    <property type="match status" value="1"/>
</dbReference>
<dbReference type="Pfam" id="PF00605">
    <property type="entry name" value="IRF"/>
    <property type="match status" value="1"/>
</dbReference>
<dbReference type="Pfam" id="PF10401">
    <property type="entry name" value="IRF-3"/>
    <property type="match status" value="1"/>
</dbReference>
<dbReference type="PRINTS" id="PR00267">
    <property type="entry name" value="INTFRNREGFCT"/>
</dbReference>
<dbReference type="SMART" id="SM00348">
    <property type="entry name" value="IRF"/>
    <property type="match status" value="1"/>
</dbReference>
<dbReference type="SMART" id="SM01243">
    <property type="entry name" value="IRF-3"/>
    <property type="match status" value="1"/>
</dbReference>
<dbReference type="SUPFAM" id="SSF49879">
    <property type="entry name" value="SMAD/FHA domain"/>
    <property type="match status" value="1"/>
</dbReference>
<dbReference type="SUPFAM" id="SSF46785">
    <property type="entry name" value="Winged helix' DNA-binding domain"/>
    <property type="match status" value="1"/>
</dbReference>
<dbReference type="PROSITE" id="PS00601">
    <property type="entry name" value="IRF_1"/>
    <property type="match status" value="1"/>
</dbReference>
<dbReference type="PROSITE" id="PS51507">
    <property type="entry name" value="IRF_2"/>
    <property type="match status" value="1"/>
</dbReference>
<gene>
    <name type="primary">IRF3</name>
</gene>
<accession>Q90643</accession>
<protein>
    <recommendedName>
        <fullName>Interferon regulatory factor 3</fullName>
        <shortName>IRF-3</shortName>
    </recommendedName>
</protein>
<evidence type="ECO:0000250" key="1">
    <source>
        <dbReference type="UniProtKB" id="Q14653"/>
    </source>
</evidence>
<evidence type="ECO:0000255" key="2">
    <source>
        <dbReference type="PROSITE-ProRule" id="PRU00840"/>
    </source>
</evidence>
<evidence type="ECO:0000269" key="3">
    <source>
    </source>
</evidence>
<feature type="chain" id="PRO_0000154555" description="Interferon regulatory factor 3">
    <location>
        <begin position="1"/>
        <end position="491"/>
    </location>
</feature>
<feature type="DNA-binding region" description="IRF tryptophan pentad repeat" evidence="2">
    <location>
        <begin position="12"/>
        <end position="116"/>
    </location>
</feature>
<sequence length="491" mass="54442">MAALDSEGDAQKLRFGPWLLNAVSSGLYRGLCWIDPDRRIFRIPWKHNARKDVTSSDVEIFKAWAKASGRYEGNAEDPAKWKTNFRCALRSTHMFMLLEDRSKCNDDPHKVYAVASGVPNDRGSGGPVAGALQQQPQLLLNHHDLALENTPTDSTEGVAAAALTQVDLDLLQSVLQHCNISALGSQPTLWAHTGDALPEDALLLPGQDGCLPGPQFQDWRQLEEPLLLGNQPLTGGGCGQDGAGALPVSEECAIPAPSPAEELLFQSANPAPPPPAGDIGGLPPLLDITIYYRGKMVYQEQVDDSRCVLAYQPLDPAVAEQRLVLFPSPASLPDPRQRRYTEDLLEVAGLRLEQRAGQLLATRLKKCKVFWALSQQLEGGEPPLNLLHRDQETTIFDFRVFCTELRDFRDSRRERSPDFTIFLCFGQCFSSTKPKESKLILVKLVPQFCEYWYEQVQRGGASSLNSGNVSLQLSDSFNLFELIEQYHMQTD</sequence>
<reference key="1">
    <citation type="journal article" date="1995" name="Nucleic Acids Res.">
        <title>cIRF-3, a new member of the interferon regulatory factor (IRF) family that is rapidly and transiently induced by dsRNA.</title>
        <authorList>
            <person name="Grant C.E."/>
            <person name="Vasa M.Z."/>
            <person name="Deeley R.G."/>
        </authorList>
    </citation>
    <scope>NUCLEOTIDE SEQUENCE [MRNA]</scope>
    <scope>FUNCTION</scope>
    <scope>TISSUE SPECIFICITY</scope>
    <scope>INDUCTION BY POLY I:C</scope>
    <source>
        <tissue>Liver</tissue>
    </source>
</reference>
<name>IRF3_CHICK</name>
<proteinExistence type="evidence at transcript level"/>